<accession>P62590</accession>
<accession>P09999</accession>
<accession>P11743</accession>
<keyword id="KW-0229">DNA integration</keyword>
<keyword id="KW-0233">DNA recombination</keyword>
<keyword id="KW-0238">DNA-binding</keyword>
<keyword id="KW-0614">Plasmid</keyword>
<keyword id="KW-0814">Transposable element</keyword>
<keyword id="KW-1179">Viral genome integration</keyword>
<keyword id="KW-1160">Virus entry into host cell</keyword>
<sequence length="337" mass="38381">MKTATAPLPPLRSVKVLDQLRERIRYLHYSLRTEQAYVHWVRAFIRFHGVRHPATLGSSEVEAFLSWLANERKVSVSTHRQALAALLFFYGKVLCTDLPWLQEIGRPRPSRRLPVVLTPDEVVRILGFLEGEHRLFAQLLYGTGMRISEGLQLRVKDLDFDHGTIIVREGKGSKDRALMLPESLAPSLREQLSRARAWWLKDQAEGRSGVALPDALERKYPRAGHSWPWFWVFAQHTHSTDPRSGVVRRHHMYDQTFQRAFKRAVEQAGITKPATPHTLRHSFATALLRSGYDIRTVQDLLGHSDVSTTMIYTHVLKVGGAGVRSPLDALPPLTSER</sequence>
<name>INT2_ECOLX</name>
<geneLocation type="plasmid">
    <name>IncN R46</name>
</geneLocation>
<geneLocation type="plasmid">
    <name>IncP-beta R751</name>
</geneLocation>
<geneLocation type="plasmid">
    <name>RGN238</name>
</geneLocation>
<geneLocation type="plasmid">
    <name>R6-5</name>
</geneLocation>
<geneLocation type="plasmid">
    <name>pLMO20</name>
</geneLocation>
<geneLocation type="plasmid">
    <name>pLMO27</name>
</geneLocation>
<geneLocation type="plasmid">
    <name>pLMO150</name>
</geneLocation>
<geneLocation type="plasmid">
    <name>pLMO229</name>
</geneLocation>
<feature type="chain" id="PRO_0000197530" description="Integrase/recombinase">
    <location>
        <begin position="1"/>
        <end position="337"/>
    </location>
</feature>
<feature type="domain" description="Core-binding (CB)" evidence="2">
    <location>
        <begin position="14"/>
        <end position="94"/>
    </location>
</feature>
<feature type="domain" description="Tyr recombinase" evidence="1">
    <location>
        <begin position="112"/>
        <end position="328"/>
    </location>
</feature>
<feature type="active site" evidence="1">
    <location>
        <position position="146"/>
    </location>
</feature>
<feature type="active site" evidence="1">
    <location>
        <position position="171"/>
    </location>
</feature>
<feature type="active site" evidence="1">
    <location>
        <position position="277"/>
    </location>
</feature>
<feature type="active site" evidence="1">
    <location>
        <position position="280"/>
    </location>
</feature>
<feature type="active site" evidence="1">
    <location>
        <position position="303"/>
    </location>
</feature>
<feature type="active site" description="O-(3'-phospho-DNA)-tyrosine intermediate" evidence="1">
    <location>
        <position position="312"/>
    </location>
</feature>
<feature type="sequence variant" description="In plasmid pLMO150.">
    <original>R</original>
    <variation>P</variation>
    <location>
        <position position="32"/>
    </location>
</feature>
<feature type="sequence variant" description="In plasmid pLMO20.">
    <original>A</original>
    <variation>P</variation>
    <location>
        <position position="82"/>
    </location>
</feature>
<feature type="sequence variant" description="In plasmid pLMO20.">
    <original>A</original>
    <variation>P</variation>
    <location>
        <position position="84"/>
    </location>
</feature>
<feature type="sequence variant" description="In plasmid RGN238.">
    <original>E</original>
    <variation>Q</variation>
    <location>
        <position position="205"/>
    </location>
</feature>
<organism>
    <name type="scientific">Escherichia coli</name>
    <dbReference type="NCBI Taxonomy" id="562"/>
    <lineage>
        <taxon>Bacteria</taxon>
        <taxon>Pseudomonadati</taxon>
        <taxon>Pseudomonadota</taxon>
        <taxon>Gammaproteobacteria</taxon>
        <taxon>Enterobacterales</taxon>
        <taxon>Enterobacteriaceae</taxon>
        <taxon>Escherichia</taxon>
    </lineage>
</organism>
<evidence type="ECO:0000255" key="1">
    <source>
        <dbReference type="PROSITE-ProRule" id="PRU01246"/>
    </source>
</evidence>
<evidence type="ECO:0000255" key="2">
    <source>
        <dbReference type="PROSITE-ProRule" id="PRU01248"/>
    </source>
</evidence>
<evidence type="ECO:0000305" key="3"/>
<gene>
    <name type="primary">int</name>
</gene>
<protein>
    <recommendedName>
        <fullName>Integrase/recombinase</fullName>
    </recommendedName>
    <alternativeName>
        <fullName>E2 protein</fullName>
    </alternativeName>
</protein>
<reference key="1">
    <citation type="journal article" date="1987" name="Nucleic Acids Res.">
        <title>The region of the IncN plasmid R46 coding for resistance to beta-lactam antibiotics, streptomycin/spectinomycin and sulphonamides is closely related to antibiotic resistance segments found in IncW plasmids and in Tn21-like transposons.</title>
        <authorList>
            <person name="Hall R.M."/>
            <person name="Vockler C."/>
        </authorList>
    </citation>
    <scope>NUCLEOTIDE SEQUENCE [GENOMIC DNA]</scope>
    <source>
        <plasmid>IncN R46</plasmid>
    </source>
</reference>
<reference key="2">
    <citation type="journal article" date="1987" name="Proc. Natl. Acad. Sci. U.S.A.">
        <title>Precise insertion of antibiotic resistance determinants into Tn21-like transposons: nucleotide sequence of the OXA-1 beta-lactamase gene.</title>
        <authorList>
            <person name="Ouellette M."/>
            <person name="Bissonnette L."/>
            <person name="Roy P.H."/>
        </authorList>
    </citation>
    <scope>PARTIAL NUCLEOTIDE SEQUENCE [GENOMIC DNA]</scope>
    <source>
        <plasmid>RGN238</plasmid>
    </source>
</reference>
<reference key="3">
    <citation type="submission" date="1987-12" db="EMBL/GenBank/DDBJ databases">
        <authorList>
            <person name="Ouellette M."/>
        </authorList>
    </citation>
    <scope>NUCLEOTIDE SEQUENCE [GENOMIC DNA]</scope>
    <source>
        <plasmid>RGN238</plasmid>
    </source>
</reference>
<reference key="4">
    <citation type="journal article" date="1988" name="Mol. Gen. Genet.">
        <title>Site-specific recombination promotes linkage between trimethoprim- and sulfonamide resistance genes. Sequence characterization of dhfrV and sulI and a recombination active locus of Tn21.</title>
        <authorList>
            <person name="Sundstroem L."/>
            <person name="Radstroem P."/>
            <person name="Swedberg G."/>
            <person name="Skoeld O."/>
        </authorList>
    </citation>
    <scope>NUCLEOTIDE SEQUENCE [GENOMIC DNA]</scope>
    <source>
        <plasmid>pLMO20</plasmid>
        <plasmid>R6-5</plasmid>
    </source>
</reference>
<reference key="5">
    <citation type="journal article" date="1994" name="J. Bacteriol.">
        <title>Transposon Tn5090 of plasmid R751, which carries an integron, is related to Tn7, Mu, and the retroelements.</title>
        <authorList>
            <person name="Raadstroem P."/>
            <person name="Skoeld O."/>
            <person name="Swedberg G."/>
            <person name="Flensburg J."/>
            <person name="Roy P.H."/>
            <person name="Sundstroem L."/>
        </authorList>
    </citation>
    <scope>NUCLEOTIDE SEQUENCE [GENOMIC DNA]</scope>
    <source>
        <plasmid>IncP-beta R751</plasmid>
        <transposon>Tn5090</transposon>
    </source>
</reference>
<reference key="6">
    <citation type="journal article" date="1990" name="Antimicrob. Agents Chemother.">
        <title>The dhfrI trimethoprim resistance gene of Tn7 can be found at specific sites in other genetic surroundings.</title>
        <authorList>
            <person name="Sundstroem L."/>
            <person name="Skoeld O."/>
        </authorList>
    </citation>
    <scope>NUCLEOTIDE SEQUENCE [GENOMIC DNA] OF 1-145</scope>
    <source>
        <plasmid>pLMO150</plasmid>
        <plasmid>pLMO229</plasmid>
    </source>
</reference>
<reference key="7">
    <citation type="submission" date="1991-03" db="EMBL/GenBank/DDBJ databases">
        <authorList>
            <person name="Sundstroem L."/>
            <person name="Swedberg G."/>
            <person name="Skold O."/>
        </authorList>
    </citation>
    <scope>NUCLEOTIDE SEQUENCE [GENOMIC DNA] OF 1-145</scope>
    <source>
        <plasmid>pLMO27</plasmid>
        <transposon>Tn5086</transposon>
    </source>
</reference>
<dbReference type="EMBL" id="M95287">
    <property type="protein sequence ID" value="AAB59081.1"/>
    <property type="molecule type" value="Genomic_DNA"/>
</dbReference>
<dbReference type="EMBL" id="J02967">
    <property type="protein sequence ID" value="AAA91585.1"/>
    <property type="molecule type" value="Genomic_DNA"/>
</dbReference>
<dbReference type="EMBL" id="X12868">
    <property type="protein sequence ID" value="CAA31355.1"/>
    <property type="molecule type" value="Genomic_DNA"/>
</dbReference>
<dbReference type="EMBL" id="X12870">
    <property type="protein sequence ID" value="CAA31361.1"/>
    <property type="molecule type" value="Genomic_DNA"/>
</dbReference>
<dbReference type="EMBL" id="X17477">
    <property type="protein sequence ID" value="CAA35508.1"/>
    <property type="molecule type" value="Genomic_DNA"/>
</dbReference>
<dbReference type="EMBL" id="X17478">
    <property type="protein sequence ID" value="CAA35511.1"/>
    <property type="molecule type" value="Genomic_DNA"/>
</dbReference>
<dbReference type="EMBL" id="X58425">
    <property type="protein sequence ID" value="CAA41325.1"/>
    <property type="molecule type" value="Genomic_DNA"/>
</dbReference>
<dbReference type="PIR" id="C26839">
    <property type="entry name" value="C26839"/>
</dbReference>
<dbReference type="RefSeq" id="YP_001096414.1">
    <property type="nucleotide sequence ID" value="NC_009133.1"/>
</dbReference>
<dbReference type="RefSeq" id="YP_001816602.1">
    <property type="nucleotide sequence ID" value="NC_010558.1"/>
</dbReference>
<dbReference type="RefSeq" id="YP_003108348.1">
    <property type="nucleotide sequence ID" value="NC_013122.1"/>
</dbReference>
<dbReference type="RefSeq" id="YP_006903510.1">
    <property type="nucleotide sequence ID" value="NC_019043.1"/>
</dbReference>
<dbReference type="RefSeq" id="YP_006952404.1">
    <property type="nucleotide sequence ID" value="NC_019062.1"/>
</dbReference>
<dbReference type="RefSeq" id="YP_006953615.1">
    <property type="nucleotide sequence ID" value="NC_019082.1"/>
</dbReference>
<dbReference type="RefSeq" id="YP_006953994.1">
    <property type="nucleotide sequence ID" value="NC_019091.1"/>
</dbReference>
<dbReference type="RefSeq" id="YP_007349449.1">
    <property type="nucleotide sequence ID" value="NC_020086.1"/>
</dbReference>
<dbReference type="RefSeq" id="YP_008574969.1">
    <property type="nucleotide sequence ID" value="NC_022375.1"/>
</dbReference>
<dbReference type="RefSeq" id="YP_008864015.1">
    <property type="nucleotide sequence ID" value="NC_022992.1"/>
</dbReference>
<dbReference type="RefSeq" id="YP_008864682.1">
    <property type="nucleotide sequence ID" value="NC_022996.1"/>
</dbReference>
<dbReference type="RefSeq" id="YP_009060117.1">
    <property type="nucleotide sequence ID" value="NC_024956.1"/>
</dbReference>
<dbReference type="RefSeq" id="YP_009060568.1">
    <property type="nucleotide sequence ID" value="NC_024967.1"/>
</dbReference>
<dbReference type="RefSeq" id="YP_009061089.1">
    <property type="nucleotide sequence ID" value="NC_024975.1"/>
</dbReference>
<dbReference type="RefSeq" id="YP_009061439.1">
    <property type="nucleotide sequence ID" value="NC_024978.1"/>
</dbReference>
<dbReference type="RefSeq" id="YP_009061544.1">
    <property type="nucleotide sequence ID" value="NC_024979.1"/>
</dbReference>
<dbReference type="RefSeq" id="YP_009061697.1">
    <property type="nucleotide sequence ID" value="NC_024980.1"/>
</dbReference>
<dbReference type="RefSeq" id="YP_009068297.1">
    <property type="nucleotide sequence ID" value="NC_025139.1"/>
</dbReference>
<dbReference type="RefSeq" id="YP_009068489.1">
    <property type="nucleotide sequence ID" value="NC_025141.1"/>
</dbReference>
<dbReference type="RefSeq" id="YP_009068728.1">
    <property type="nucleotide sequence ID" value="NC_025142.1"/>
</dbReference>
<dbReference type="RefSeq" id="YP_009068858.1">
    <property type="nucleotide sequence ID" value="NC_025143.1"/>
</dbReference>
<dbReference type="RefSeq" id="YP_009069126.1">
    <property type="nucleotide sequence ID" value="NC_025144.1"/>
</dbReference>
<dbReference type="RefSeq" id="YP_009070864.1">
    <property type="nucleotide sequence ID" value="NC_025176.1"/>
</dbReference>
<dbReference type="RefSeq" id="YP_009071507.1">
    <property type="nucleotide sequence ID" value="NC_025183.1"/>
</dbReference>
<dbReference type="RefSeq" id="YP_190211.1">
    <property type="nucleotide sequence ID" value="NC_006671.1"/>
</dbReference>
<dbReference type="SMR" id="P62590"/>
<dbReference type="OMA" id="GWQWVFP"/>
<dbReference type="GO" id="GO:0003677">
    <property type="term" value="F:DNA binding"/>
    <property type="evidence" value="ECO:0007669"/>
    <property type="project" value="UniProtKB-KW"/>
</dbReference>
<dbReference type="GO" id="GO:0015074">
    <property type="term" value="P:DNA integration"/>
    <property type="evidence" value="ECO:0007669"/>
    <property type="project" value="UniProtKB-KW"/>
</dbReference>
<dbReference type="GO" id="GO:0006310">
    <property type="term" value="P:DNA recombination"/>
    <property type="evidence" value="ECO:0007669"/>
    <property type="project" value="UniProtKB-KW"/>
</dbReference>
<dbReference type="GO" id="GO:0075713">
    <property type="term" value="P:establishment of integrated proviral latency"/>
    <property type="evidence" value="ECO:0007669"/>
    <property type="project" value="UniProtKB-KW"/>
</dbReference>
<dbReference type="GO" id="GO:0046718">
    <property type="term" value="P:symbiont entry into host cell"/>
    <property type="evidence" value="ECO:0007669"/>
    <property type="project" value="UniProtKB-KW"/>
</dbReference>
<dbReference type="GO" id="GO:0044826">
    <property type="term" value="P:viral genome integration into host DNA"/>
    <property type="evidence" value="ECO:0007669"/>
    <property type="project" value="UniProtKB-KW"/>
</dbReference>
<dbReference type="CDD" id="cd01193">
    <property type="entry name" value="INT_IntI_C"/>
    <property type="match status" value="1"/>
</dbReference>
<dbReference type="Gene3D" id="1.10.150.130">
    <property type="match status" value="1"/>
</dbReference>
<dbReference type="Gene3D" id="1.10.443.10">
    <property type="entry name" value="Intergrase catalytic core"/>
    <property type="match status" value="1"/>
</dbReference>
<dbReference type="InterPro" id="IPR044068">
    <property type="entry name" value="CB"/>
</dbReference>
<dbReference type="InterPro" id="IPR011010">
    <property type="entry name" value="DNA_brk_join_enz"/>
</dbReference>
<dbReference type="InterPro" id="IPR013762">
    <property type="entry name" value="Integrase-like_cat_sf"/>
</dbReference>
<dbReference type="InterPro" id="IPR002104">
    <property type="entry name" value="Integrase_catalytic"/>
</dbReference>
<dbReference type="InterPro" id="IPR011946">
    <property type="entry name" value="Integrase_integron-type"/>
</dbReference>
<dbReference type="InterPro" id="IPR010998">
    <property type="entry name" value="Integrase_recombinase_N"/>
</dbReference>
<dbReference type="InterPro" id="IPR004107">
    <property type="entry name" value="Integrase_SAM-like_N"/>
</dbReference>
<dbReference type="InterPro" id="IPR050090">
    <property type="entry name" value="Tyrosine_recombinase_XerCD"/>
</dbReference>
<dbReference type="NCBIfam" id="TIGR02249">
    <property type="entry name" value="integrase_gron"/>
    <property type="match status" value="1"/>
</dbReference>
<dbReference type="NCBIfam" id="NF011946">
    <property type="entry name" value="PRK15417.1"/>
    <property type="match status" value="1"/>
</dbReference>
<dbReference type="PANTHER" id="PTHR30349">
    <property type="entry name" value="PHAGE INTEGRASE-RELATED"/>
    <property type="match status" value="1"/>
</dbReference>
<dbReference type="PANTHER" id="PTHR30349:SF64">
    <property type="entry name" value="PROPHAGE INTEGRASE INTD-RELATED"/>
    <property type="match status" value="1"/>
</dbReference>
<dbReference type="Pfam" id="PF13495">
    <property type="entry name" value="Phage_int_SAM_4"/>
    <property type="match status" value="1"/>
</dbReference>
<dbReference type="Pfam" id="PF00589">
    <property type="entry name" value="Phage_integrase"/>
    <property type="match status" value="1"/>
</dbReference>
<dbReference type="SUPFAM" id="SSF56349">
    <property type="entry name" value="DNA breaking-rejoining enzymes"/>
    <property type="match status" value="1"/>
</dbReference>
<dbReference type="PROSITE" id="PS51900">
    <property type="entry name" value="CB"/>
    <property type="match status" value="1"/>
</dbReference>
<dbReference type="PROSITE" id="PS51898">
    <property type="entry name" value="TYR_RECOMBINASE"/>
    <property type="match status" value="1"/>
</dbReference>
<comment type="function">
    <text>Putative integrase believed to be involved in the insertion of antibiotic resistance genes into plasmids and transposons.</text>
</comment>
<comment type="miscellaneous">
    <text>The sequence shown is that of plasmid IncN R46.</text>
</comment>
<comment type="similarity">
    <text evidence="3">Belongs to the 'phage' integrase family.</text>
</comment>
<proteinExistence type="inferred from homology"/>